<feature type="chain" id="PRO_0000374344" description="tRNA-2-methylthio-N(6)-dimethylallyladenosine synthase">
    <location>
        <begin position="1"/>
        <end position="449"/>
    </location>
</feature>
<feature type="domain" description="MTTase N-terminal" evidence="1">
    <location>
        <begin position="2"/>
        <end position="119"/>
    </location>
</feature>
<feature type="domain" description="Radical SAM core" evidence="2">
    <location>
        <begin position="143"/>
        <end position="378"/>
    </location>
</feature>
<feature type="domain" description="TRAM" evidence="1">
    <location>
        <begin position="381"/>
        <end position="443"/>
    </location>
</feature>
<feature type="binding site" evidence="1">
    <location>
        <position position="11"/>
    </location>
    <ligand>
        <name>[4Fe-4S] cluster</name>
        <dbReference type="ChEBI" id="CHEBI:49883"/>
        <label>1</label>
    </ligand>
</feature>
<feature type="binding site" evidence="1">
    <location>
        <position position="47"/>
    </location>
    <ligand>
        <name>[4Fe-4S] cluster</name>
        <dbReference type="ChEBI" id="CHEBI:49883"/>
        <label>1</label>
    </ligand>
</feature>
<feature type="binding site" evidence="1">
    <location>
        <position position="82"/>
    </location>
    <ligand>
        <name>[4Fe-4S] cluster</name>
        <dbReference type="ChEBI" id="CHEBI:49883"/>
        <label>1</label>
    </ligand>
</feature>
<feature type="binding site" evidence="1">
    <location>
        <position position="157"/>
    </location>
    <ligand>
        <name>[4Fe-4S] cluster</name>
        <dbReference type="ChEBI" id="CHEBI:49883"/>
        <label>2</label>
        <note>4Fe-4S-S-AdoMet</note>
    </ligand>
</feature>
<feature type="binding site" evidence="1">
    <location>
        <position position="161"/>
    </location>
    <ligand>
        <name>[4Fe-4S] cluster</name>
        <dbReference type="ChEBI" id="CHEBI:49883"/>
        <label>2</label>
        <note>4Fe-4S-S-AdoMet</note>
    </ligand>
</feature>
<feature type="binding site" evidence="1">
    <location>
        <position position="164"/>
    </location>
    <ligand>
        <name>[4Fe-4S] cluster</name>
        <dbReference type="ChEBI" id="CHEBI:49883"/>
        <label>2</label>
        <note>4Fe-4S-S-AdoMet</note>
    </ligand>
</feature>
<proteinExistence type="inferred from homology"/>
<sequence>MKGLFIRTYGCQMNVYDSERIRDVLRPLGYAPVETPESADLVVVNTCHIREKATEKVYSELGQLKRMKEASGGRMTIAVAGCVAQAEGEELIRRQPAVDLVLGPQAYHKLPEMIARASRAIGDRLETEFDTVEKFDALPKTREADGPAAFVSVQEGCDKFCTFCVVPYTRGAEMSRRVDDIVFETRSLASQGVREITLLGQNVNAFHGPAPVLEGGEDWTLGQLCRHLSKIGGIERIRYTTSHPRDMDDDLIAAHGDTPAMMPFLHLPVQSGSDRILKAMNRGHTADHYRDIITRVRAARPDIAIASDFIVGFPGESDADFEATMQLVRDIGYAIAYSFKYSSRPGTPAAEMHGHLSESVKDARLQALQALLREQQTEFNASQIGKTLPVLVTGKGRNAGQMHGRSPYLQAVHFEGPDDLNGKIVDVKVIGASLNSLTGELVRVAEAAL</sequence>
<organism>
    <name type="scientific">Hyphomonas neptunium (strain ATCC 15444)</name>
    <dbReference type="NCBI Taxonomy" id="228405"/>
    <lineage>
        <taxon>Bacteria</taxon>
        <taxon>Pseudomonadati</taxon>
        <taxon>Pseudomonadota</taxon>
        <taxon>Alphaproteobacteria</taxon>
        <taxon>Hyphomonadales</taxon>
        <taxon>Hyphomonadaceae</taxon>
        <taxon>Hyphomonas</taxon>
    </lineage>
</organism>
<comment type="function">
    <text evidence="1">Catalyzes the methylthiolation of N6-(dimethylallyl)adenosine (i(6)A), leading to the formation of 2-methylthio-N6-(dimethylallyl)adenosine (ms(2)i(6)A) at position 37 in tRNAs that read codons beginning with uridine.</text>
</comment>
<comment type="catalytic activity">
    <reaction evidence="1">
        <text>N(6)-dimethylallyladenosine(37) in tRNA + (sulfur carrier)-SH + AH2 + 2 S-adenosyl-L-methionine = 2-methylsulfanyl-N(6)-dimethylallyladenosine(37) in tRNA + (sulfur carrier)-H + 5'-deoxyadenosine + L-methionine + A + S-adenosyl-L-homocysteine + 2 H(+)</text>
        <dbReference type="Rhea" id="RHEA:37067"/>
        <dbReference type="Rhea" id="RHEA-COMP:10375"/>
        <dbReference type="Rhea" id="RHEA-COMP:10376"/>
        <dbReference type="Rhea" id="RHEA-COMP:14737"/>
        <dbReference type="Rhea" id="RHEA-COMP:14739"/>
        <dbReference type="ChEBI" id="CHEBI:13193"/>
        <dbReference type="ChEBI" id="CHEBI:15378"/>
        <dbReference type="ChEBI" id="CHEBI:17319"/>
        <dbReference type="ChEBI" id="CHEBI:17499"/>
        <dbReference type="ChEBI" id="CHEBI:29917"/>
        <dbReference type="ChEBI" id="CHEBI:57844"/>
        <dbReference type="ChEBI" id="CHEBI:57856"/>
        <dbReference type="ChEBI" id="CHEBI:59789"/>
        <dbReference type="ChEBI" id="CHEBI:64428"/>
        <dbReference type="ChEBI" id="CHEBI:74415"/>
        <dbReference type="ChEBI" id="CHEBI:74417"/>
        <dbReference type="EC" id="2.8.4.3"/>
    </reaction>
</comment>
<comment type="cofactor">
    <cofactor evidence="1">
        <name>[4Fe-4S] cluster</name>
        <dbReference type="ChEBI" id="CHEBI:49883"/>
    </cofactor>
    <text evidence="1">Binds 2 [4Fe-4S] clusters. One cluster is coordinated with 3 cysteines and an exchangeable S-adenosyl-L-methionine.</text>
</comment>
<comment type="subunit">
    <text evidence="1">Monomer.</text>
</comment>
<comment type="subcellular location">
    <subcellularLocation>
        <location evidence="1">Cytoplasm</location>
    </subcellularLocation>
</comment>
<comment type="similarity">
    <text evidence="1">Belongs to the methylthiotransferase family. MiaB subfamily.</text>
</comment>
<gene>
    <name evidence="1" type="primary">miaB</name>
    <name type="ordered locus">HNE_0103</name>
</gene>
<dbReference type="EC" id="2.8.4.3" evidence="1"/>
<dbReference type="EMBL" id="CP000158">
    <property type="protein sequence ID" value="ABI77939.1"/>
    <property type="molecule type" value="Genomic_DNA"/>
</dbReference>
<dbReference type="SMR" id="Q0C606"/>
<dbReference type="STRING" id="228405.HNE_0103"/>
<dbReference type="KEGG" id="hne:HNE_0103"/>
<dbReference type="eggNOG" id="COG0621">
    <property type="taxonomic scope" value="Bacteria"/>
</dbReference>
<dbReference type="HOGENOM" id="CLU_018697_2_0_5"/>
<dbReference type="Proteomes" id="UP000001959">
    <property type="component" value="Chromosome"/>
</dbReference>
<dbReference type="GO" id="GO:0005829">
    <property type="term" value="C:cytosol"/>
    <property type="evidence" value="ECO:0007669"/>
    <property type="project" value="TreeGrafter"/>
</dbReference>
<dbReference type="GO" id="GO:0051539">
    <property type="term" value="F:4 iron, 4 sulfur cluster binding"/>
    <property type="evidence" value="ECO:0007669"/>
    <property type="project" value="UniProtKB-UniRule"/>
</dbReference>
<dbReference type="GO" id="GO:0046872">
    <property type="term" value="F:metal ion binding"/>
    <property type="evidence" value="ECO:0007669"/>
    <property type="project" value="UniProtKB-KW"/>
</dbReference>
<dbReference type="GO" id="GO:0035597">
    <property type="term" value="F:N6-isopentenyladenosine methylthiotransferase activity"/>
    <property type="evidence" value="ECO:0007669"/>
    <property type="project" value="TreeGrafter"/>
</dbReference>
<dbReference type="CDD" id="cd01335">
    <property type="entry name" value="Radical_SAM"/>
    <property type="match status" value="1"/>
</dbReference>
<dbReference type="FunFam" id="3.40.50.12160:FF:000003">
    <property type="entry name" value="CDK5 regulatory subunit-associated protein 1"/>
    <property type="match status" value="1"/>
</dbReference>
<dbReference type="FunFam" id="3.80.30.20:FF:000001">
    <property type="entry name" value="tRNA-2-methylthio-N(6)-dimethylallyladenosine synthase 2"/>
    <property type="match status" value="1"/>
</dbReference>
<dbReference type="Gene3D" id="3.40.50.12160">
    <property type="entry name" value="Methylthiotransferase, N-terminal domain"/>
    <property type="match status" value="1"/>
</dbReference>
<dbReference type="Gene3D" id="3.80.30.20">
    <property type="entry name" value="tm_1862 like domain"/>
    <property type="match status" value="1"/>
</dbReference>
<dbReference type="HAMAP" id="MF_01864">
    <property type="entry name" value="tRNA_metthiotr_MiaB"/>
    <property type="match status" value="1"/>
</dbReference>
<dbReference type="InterPro" id="IPR006638">
    <property type="entry name" value="Elp3/MiaA/NifB-like_rSAM"/>
</dbReference>
<dbReference type="InterPro" id="IPR005839">
    <property type="entry name" value="Methylthiotransferase"/>
</dbReference>
<dbReference type="InterPro" id="IPR020612">
    <property type="entry name" value="Methylthiotransferase_CS"/>
</dbReference>
<dbReference type="InterPro" id="IPR013848">
    <property type="entry name" value="Methylthiotransferase_N"/>
</dbReference>
<dbReference type="InterPro" id="IPR038135">
    <property type="entry name" value="Methylthiotransferase_N_sf"/>
</dbReference>
<dbReference type="InterPro" id="IPR006463">
    <property type="entry name" value="MiaB_methiolase"/>
</dbReference>
<dbReference type="InterPro" id="IPR007197">
    <property type="entry name" value="rSAM"/>
</dbReference>
<dbReference type="InterPro" id="IPR023404">
    <property type="entry name" value="rSAM_horseshoe"/>
</dbReference>
<dbReference type="InterPro" id="IPR002792">
    <property type="entry name" value="TRAM_dom"/>
</dbReference>
<dbReference type="NCBIfam" id="TIGR01574">
    <property type="entry name" value="miaB-methiolase"/>
    <property type="match status" value="1"/>
</dbReference>
<dbReference type="NCBIfam" id="TIGR00089">
    <property type="entry name" value="MiaB/RimO family radical SAM methylthiotransferase"/>
    <property type="match status" value="1"/>
</dbReference>
<dbReference type="PANTHER" id="PTHR43020">
    <property type="entry name" value="CDK5 REGULATORY SUBUNIT-ASSOCIATED PROTEIN 1"/>
    <property type="match status" value="1"/>
</dbReference>
<dbReference type="PANTHER" id="PTHR43020:SF2">
    <property type="entry name" value="MITOCHONDRIAL TRNA METHYLTHIOTRANSFERASE CDK5RAP1"/>
    <property type="match status" value="1"/>
</dbReference>
<dbReference type="Pfam" id="PF04055">
    <property type="entry name" value="Radical_SAM"/>
    <property type="match status" value="1"/>
</dbReference>
<dbReference type="Pfam" id="PF01938">
    <property type="entry name" value="TRAM"/>
    <property type="match status" value="1"/>
</dbReference>
<dbReference type="Pfam" id="PF00919">
    <property type="entry name" value="UPF0004"/>
    <property type="match status" value="1"/>
</dbReference>
<dbReference type="SFLD" id="SFLDF00273">
    <property type="entry name" value="(dimethylallyl)adenosine_tRNA"/>
    <property type="match status" value="1"/>
</dbReference>
<dbReference type="SFLD" id="SFLDG01082">
    <property type="entry name" value="B12-binding_domain_containing"/>
    <property type="match status" value="1"/>
</dbReference>
<dbReference type="SFLD" id="SFLDG01061">
    <property type="entry name" value="methylthiotransferase"/>
    <property type="match status" value="1"/>
</dbReference>
<dbReference type="SMART" id="SM00729">
    <property type="entry name" value="Elp3"/>
    <property type="match status" value="1"/>
</dbReference>
<dbReference type="SUPFAM" id="SSF102114">
    <property type="entry name" value="Radical SAM enzymes"/>
    <property type="match status" value="1"/>
</dbReference>
<dbReference type="PROSITE" id="PS51449">
    <property type="entry name" value="MTTASE_N"/>
    <property type="match status" value="1"/>
</dbReference>
<dbReference type="PROSITE" id="PS01278">
    <property type="entry name" value="MTTASE_RADICAL"/>
    <property type="match status" value="1"/>
</dbReference>
<dbReference type="PROSITE" id="PS51918">
    <property type="entry name" value="RADICAL_SAM"/>
    <property type="match status" value="1"/>
</dbReference>
<dbReference type="PROSITE" id="PS50926">
    <property type="entry name" value="TRAM"/>
    <property type="match status" value="1"/>
</dbReference>
<reference key="1">
    <citation type="journal article" date="2006" name="J. Bacteriol.">
        <title>Comparative genomic evidence for a close relationship between the dimorphic prosthecate bacteria Hyphomonas neptunium and Caulobacter crescentus.</title>
        <authorList>
            <person name="Badger J.H."/>
            <person name="Hoover T.R."/>
            <person name="Brun Y.V."/>
            <person name="Weiner R.M."/>
            <person name="Laub M.T."/>
            <person name="Alexandre G."/>
            <person name="Mrazek J."/>
            <person name="Ren Q."/>
            <person name="Paulsen I.T."/>
            <person name="Nelson K.E."/>
            <person name="Khouri H.M."/>
            <person name="Radune D."/>
            <person name="Sosa J."/>
            <person name="Dodson R.J."/>
            <person name="Sullivan S.A."/>
            <person name="Rosovitz M.J."/>
            <person name="Madupu R."/>
            <person name="Brinkac L.M."/>
            <person name="Durkin A.S."/>
            <person name="Daugherty S.C."/>
            <person name="Kothari S.P."/>
            <person name="Giglio M.G."/>
            <person name="Zhou L."/>
            <person name="Haft D.H."/>
            <person name="Selengut J.D."/>
            <person name="Davidsen T.M."/>
            <person name="Yang Q."/>
            <person name="Zafar N."/>
            <person name="Ward N.L."/>
        </authorList>
    </citation>
    <scope>NUCLEOTIDE SEQUENCE [LARGE SCALE GENOMIC DNA]</scope>
    <source>
        <strain>ATCC 15444</strain>
    </source>
</reference>
<name>MIAB_HYPNA</name>
<protein>
    <recommendedName>
        <fullName evidence="1">tRNA-2-methylthio-N(6)-dimethylallyladenosine synthase</fullName>
        <ecNumber evidence="1">2.8.4.3</ecNumber>
    </recommendedName>
    <alternativeName>
        <fullName evidence="1">(Dimethylallyl)adenosine tRNA methylthiotransferase MiaB</fullName>
    </alternativeName>
    <alternativeName>
        <fullName evidence="1">tRNA-i(6)A37 methylthiotransferase</fullName>
    </alternativeName>
</protein>
<keyword id="KW-0004">4Fe-4S</keyword>
<keyword id="KW-0963">Cytoplasm</keyword>
<keyword id="KW-0408">Iron</keyword>
<keyword id="KW-0411">Iron-sulfur</keyword>
<keyword id="KW-0479">Metal-binding</keyword>
<keyword id="KW-1185">Reference proteome</keyword>
<keyword id="KW-0949">S-adenosyl-L-methionine</keyword>
<keyword id="KW-0808">Transferase</keyword>
<keyword id="KW-0819">tRNA processing</keyword>
<evidence type="ECO:0000255" key="1">
    <source>
        <dbReference type="HAMAP-Rule" id="MF_01864"/>
    </source>
</evidence>
<evidence type="ECO:0000255" key="2">
    <source>
        <dbReference type="PROSITE-ProRule" id="PRU01266"/>
    </source>
</evidence>
<accession>Q0C606</accession>